<sequence>MAAKRYTSMAYANADEMTFGVSKYPVKAGLDLEIGAGYTIPEINYAPRPEAGASKEKLIKEYERITTDVMERMVQVGFPAIILETEHVQQMSNNPSWGAEVAHAQKTIMEKYHDEYGIKCALRHTIGDIRENREFLQLRGDKYSVFLEAFEQCAENGADLLSVESMGGKEVFDYAVLRNDIPGLLYSIGCLGSIDMELIWTDISKIAKKTGTISAGDTDCAQANTAMFIGGGLLNKNLAHTIAVIARAISAPRSLVAYEAGAVGPGKDCGYENIIVKAITGMPMTMEGKTSTCAHSDVMGNLVMQCCDCWSNESVEYHGEFGGTTVQCWSETLAYDCALMNTALETKNDKVLRDLMMLSDRYRDPQAYMLAYDNAYRVGQSIVKDGDNIYLRAKNAAIECCNIIEEGAAGKLELSRFETKALADAKAALEALPDDMDKFMDDCLTKYKSEVKVFKPENYGF</sequence>
<name>MTAB_METBF</name>
<proteinExistence type="evidence at protein level"/>
<evidence type="ECO:0000269" key="1">
    <source>
    </source>
</evidence>
<evidence type="ECO:0000269" key="2">
    <source>
    </source>
</evidence>
<evidence type="ECO:0000269" key="3">
    <source>
    </source>
</evidence>
<evidence type="ECO:0000305" key="4"/>
<evidence type="ECO:0007829" key="5">
    <source>
        <dbReference type="PDB" id="2I2X"/>
    </source>
</evidence>
<comment type="function">
    <text evidence="2 3">Methyltransferase involved in methanogenesis in the methanol pathway. Catalyzes the methylation of the MtaC-bound cob(I)amide.</text>
</comment>
<comment type="catalytic activity">
    <reaction evidence="2 3">
        <text>Co(I)-[methanol-specific corrinoid protein] + methanol + H(+) = methyl-Co(III)-[methanol-specific corrinoid protein] + H2O</text>
        <dbReference type="Rhea" id="RHEA:45204"/>
        <dbReference type="Rhea" id="RHEA-COMP:17570"/>
        <dbReference type="Rhea" id="RHEA-COMP:17571"/>
        <dbReference type="ChEBI" id="CHEBI:15377"/>
        <dbReference type="ChEBI" id="CHEBI:15378"/>
        <dbReference type="ChEBI" id="CHEBI:16379"/>
        <dbReference type="ChEBI" id="CHEBI:17790"/>
        <dbReference type="ChEBI" id="CHEBI:60494"/>
        <dbReference type="EC" id="2.1.1.90"/>
    </reaction>
</comment>
<comment type="subunit">
    <text evidence="1">Heterotetramer, composed of 2 MtaB and 2 MtaC subunits.</text>
</comment>
<comment type="interaction">
    <interactant intactId="EBI-9021160">
        <id>Q46EH3</id>
    </interactant>
    <interactant intactId="EBI-9021153">
        <id>Q46EH4</id>
        <label>mtaC</label>
    </interactant>
    <organismsDiffer>false</organismsDiffer>
    <experiments>2</experiments>
</comment>
<comment type="similarity">
    <text evidence="4">Belongs to the MtaB family.</text>
</comment>
<keyword id="KW-0002">3D-structure</keyword>
<keyword id="KW-0903">Direct protein sequencing</keyword>
<keyword id="KW-0479">Metal-binding</keyword>
<keyword id="KW-0489">Methyltransferase</keyword>
<keyword id="KW-0808">Transferase</keyword>
<keyword id="KW-0862">Zinc</keyword>
<feature type="initiator methionine" description="Removed" evidence="2">
    <location>
        <position position="1"/>
    </location>
</feature>
<feature type="chain" id="PRO_0000418930" description="Methanol--corrinoid protein co-methyltransferase">
    <location>
        <begin position="2"/>
        <end position="461"/>
    </location>
</feature>
<feature type="binding site" evidence="1">
    <location>
        <position position="164"/>
    </location>
    <ligand>
        <name>Zn(2+)</name>
        <dbReference type="ChEBI" id="CHEBI:29105"/>
    </ligand>
</feature>
<feature type="binding site" evidence="1">
    <location>
        <position position="220"/>
    </location>
    <ligand>
        <name>Zn(2+)</name>
        <dbReference type="ChEBI" id="CHEBI:29105"/>
    </ligand>
</feature>
<feature type="binding site" evidence="1">
    <location>
        <position position="269"/>
    </location>
    <ligand>
        <name>Zn(2+)</name>
        <dbReference type="ChEBI" id="CHEBI:29105"/>
    </ligand>
</feature>
<feature type="sequence conflict" description="In Ref. 1; AA sequence." evidence="4" ref="1">
    <original>D</original>
    <variation>G</variation>
    <location>
        <position position="437"/>
    </location>
</feature>
<feature type="strand" evidence="5">
    <location>
        <begin position="10"/>
        <end position="13"/>
    </location>
</feature>
<feature type="helix" evidence="5">
    <location>
        <begin position="14"/>
        <end position="16"/>
    </location>
</feature>
<feature type="strand" evidence="5">
    <location>
        <begin position="19"/>
        <end position="28"/>
    </location>
</feature>
<feature type="strand" evidence="5">
    <location>
        <begin position="32"/>
        <end position="38"/>
    </location>
</feature>
<feature type="strand" evidence="5">
    <location>
        <begin position="40"/>
        <end position="43"/>
    </location>
</feature>
<feature type="helix" evidence="5">
    <location>
        <begin position="49"/>
        <end position="52"/>
    </location>
</feature>
<feature type="helix" evidence="5">
    <location>
        <begin position="55"/>
        <end position="76"/>
    </location>
</feature>
<feature type="strand" evidence="5">
    <location>
        <begin position="80"/>
        <end position="86"/>
    </location>
</feature>
<feature type="helix" evidence="5">
    <location>
        <begin position="89"/>
        <end position="93"/>
    </location>
</feature>
<feature type="helix" evidence="5">
    <location>
        <begin position="95"/>
        <end position="116"/>
    </location>
</feature>
<feature type="strand" evidence="5">
    <location>
        <begin position="119"/>
        <end position="126"/>
    </location>
</feature>
<feature type="helix" evidence="5">
    <location>
        <begin position="143"/>
        <end position="155"/>
    </location>
</feature>
<feature type="strand" evidence="5">
    <location>
        <begin position="160"/>
        <end position="163"/>
    </location>
</feature>
<feature type="helix" evidence="5">
    <location>
        <begin position="169"/>
        <end position="176"/>
    </location>
</feature>
<feature type="turn" evidence="5">
    <location>
        <begin position="177"/>
        <end position="179"/>
    </location>
</feature>
<feature type="helix" evidence="5">
    <location>
        <begin position="181"/>
        <end position="189"/>
    </location>
</feature>
<feature type="helix" evidence="5">
    <location>
        <begin position="191"/>
        <end position="210"/>
    </location>
</feature>
<feature type="strand" evidence="5">
    <location>
        <begin position="213"/>
        <end position="216"/>
    </location>
</feature>
<feature type="helix" evidence="5">
    <location>
        <begin position="219"/>
        <end position="221"/>
    </location>
</feature>
<feature type="helix" evidence="5">
    <location>
        <begin position="223"/>
        <end position="230"/>
    </location>
</feature>
<feature type="helix" evidence="5">
    <location>
        <begin position="240"/>
        <end position="259"/>
    </location>
</feature>
<feature type="helix" evidence="5">
    <location>
        <begin position="273"/>
        <end position="280"/>
    </location>
</feature>
<feature type="strand" evidence="5">
    <location>
        <begin position="284"/>
        <end position="288"/>
    </location>
</feature>
<feature type="helix" evidence="5">
    <location>
        <begin position="289"/>
        <end position="291"/>
    </location>
</feature>
<feature type="turn" evidence="5">
    <location>
        <begin position="292"/>
        <end position="294"/>
    </location>
</feature>
<feature type="helix" evidence="5">
    <location>
        <begin position="302"/>
        <end position="304"/>
    </location>
</feature>
<feature type="strand" evidence="5">
    <location>
        <begin position="308"/>
        <end position="311"/>
    </location>
</feature>
<feature type="helix" evidence="5">
    <location>
        <begin position="325"/>
        <end position="345"/>
    </location>
</feature>
<feature type="helix" evidence="5">
    <location>
        <begin position="349"/>
        <end position="361"/>
    </location>
</feature>
<feature type="helix" evidence="5">
    <location>
        <begin position="365"/>
        <end position="368"/>
    </location>
</feature>
<feature type="helix" evidence="5">
    <location>
        <begin position="372"/>
        <end position="383"/>
    </location>
</feature>
<feature type="turn" evidence="5">
    <location>
        <begin position="384"/>
        <end position="387"/>
    </location>
</feature>
<feature type="helix" evidence="5">
    <location>
        <begin position="389"/>
        <end position="409"/>
    </location>
</feature>
<feature type="helix" evidence="5">
    <location>
        <begin position="416"/>
        <end position="430"/>
    </location>
</feature>
<feature type="helix" evidence="5">
    <location>
        <begin position="436"/>
        <end position="450"/>
    </location>
</feature>
<feature type="helix" evidence="5">
    <location>
        <begin position="456"/>
        <end position="459"/>
    </location>
</feature>
<organism>
    <name type="scientific">Methanosarcina barkeri (strain Fusaro / DSM 804)</name>
    <dbReference type="NCBI Taxonomy" id="269797"/>
    <lineage>
        <taxon>Archaea</taxon>
        <taxon>Methanobacteriati</taxon>
        <taxon>Methanobacteriota</taxon>
        <taxon>Stenosarchaea group</taxon>
        <taxon>Methanomicrobia</taxon>
        <taxon>Methanosarcinales</taxon>
        <taxon>Methanosarcinaceae</taxon>
        <taxon>Methanosarcina</taxon>
    </lineage>
</organism>
<gene>
    <name type="primary">mtaB</name>
    <name type="ordered locus">Mbar_A0741</name>
</gene>
<protein>
    <recommendedName>
        <fullName>Methanol--corrinoid protein co-methyltransferase</fullName>
        <ecNumber>2.1.1.90</ecNumber>
    </recommendedName>
    <alternativeName>
        <fullName>Methanol:corrinoid methyltransferase 1 subunit of 50 kDa</fullName>
        <shortName>MT1 subunit 50 kDa</shortName>
    </alternativeName>
</protein>
<dbReference type="EC" id="2.1.1.90"/>
<dbReference type="EMBL" id="Y08310">
    <property type="protein sequence ID" value="CAA69620.1"/>
    <property type="molecule type" value="Genomic_DNA"/>
</dbReference>
<dbReference type="EMBL" id="CP000099">
    <property type="protein sequence ID" value="AAZ69719.1"/>
    <property type="molecule type" value="Genomic_DNA"/>
</dbReference>
<dbReference type="PDB" id="2I2X">
    <property type="method" value="X-ray"/>
    <property type="resolution" value="2.50 A"/>
    <property type="chains" value="A/C/E/G/I/K/M/O=1-461"/>
</dbReference>
<dbReference type="PDBsum" id="2I2X"/>
<dbReference type="SMR" id="Q46EH3"/>
<dbReference type="DIP" id="DIP-61320N"/>
<dbReference type="IntAct" id="Q46EH3">
    <property type="interactions" value="1"/>
</dbReference>
<dbReference type="STRING" id="269797.Mbar_A0741"/>
<dbReference type="PaxDb" id="269797-Mbar_A0741"/>
<dbReference type="GeneID" id="24821655"/>
<dbReference type="KEGG" id="mba:Mbar_A0741"/>
<dbReference type="eggNOG" id="arCOG03330">
    <property type="taxonomic scope" value="Archaea"/>
</dbReference>
<dbReference type="HOGENOM" id="CLU_588790_0_0_2"/>
<dbReference type="OrthoDB" id="122537at2157"/>
<dbReference type="BioCyc" id="MetaCyc:MTABMBARK-MONOMER"/>
<dbReference type="BRENDA" id="2.1.1.90">
    <property type="organism ID" value="3250"/>
</dbReference>
<dbReference type="EvolutionaryTrace" id="Q46EH3"/>
<dbReference type="GO" id="GO:0046872">
    <property type="term" value="F:metal ion binding"/>
    <property type="evidence" value="ECO:0007669"/>
    <property type="project" value="UniProtKB-KW"/>
</dbReference>
<dbReference type="GO" id="GO:0047152">
    <property type="term" value="F:methanol-5-hydroxybenzimidazolylcobamide Co-methyltransferase activity"/>
    <property type="evidence" value="ECO:0007669"/>
    <property type="project" value="UniProtKB-EC"/>
</dbReference>
<dbReference type="GO" id="GO:0032259">
    <property type="term" value="P:methylation"/>
    <property type="evidence" value="ECO:0007669"/>
    <property type="project" value="UniProtKB-KW"/>
</dbReference>
<dbReference type="InterPro" id="IPR021079">
    <property type="entry name" value="MeOH-cob_MeTrfase_bsu"/>
</dbReference>
<dbReference type="NCBIfam" id="NF040651">
    <property type="entry name" value="MtaB_Meth"/>
    <property type="match status" value="1"/>
</dbReference>
<dbReference type="Pfam" id="PF12176">
    <property type="entry name" value="MtaB"/>
    <property type="match status" value="1"/>
</dbReference>
<accession>Q46EH3</accession>
<accession>P94921</accession>
<reference key="1">
    <citation type="journal article" date="1997" name="Eur. J. Biochem.">
        <title>Methanol:coenzyme M methyltransferase from Methanosarcina barkeri. Purification, properties and encoding genes of the corrinoid protein MT1.</title>
        <authorList>
            <person name="Sauer K."/>
            <person name="Harms U."/>
            <person name="Thauer R.K."/>
        </authorList>
    </citation>
    <scope>NUCLEOTIDE SEQUENCE [GENOMIC DNA]</scope>
    <scope>PROTEIN SEQUENCE OF 2-24; 112-119; 386-394; 427-438 AND 453-460</scope>
    <scope>FUNCTION</scope>
    <scope>CATALYTIC ACTIVITY</scope>
    <source>
        <strain>Fusaro / DSM 804</strain>
    </source>
</reference>
<reference key="2">
    <citation type="journal article" date="2006" name="J. Bacteriol.">
        <title>The Methanosarcina barkeri genome: comparative analysis with Methanosarcina acetivorans and Methanosarcina mazei reveals extensive rearrangement within methanosarcinal genomes.</title>
        <authorList>
            <person name="Maeder D.L."/>
            <person name="Anderson I."/>
            <person name="Brettin T.S."/>
            <person name="Bruce D.C."/>
            <person name="Gilna P."/>
            <person name="Han C.S."/>
            <person name="Lapidus A."/>
            <person name="Metcalf W.W."/>
            <person name="Saunders E."/>
            <person name="Tapia R."/>
            <person name="Sowers K.R."/>
        </authorList>
    </citation>
    <scope>NUCLEOTIDE SEQUENCE [LARGE SCALE GENOMIC DNA]</scope>
    <source>
        <strain>Fusaro / DSM 804</strain>
    </source>
</reference>
<reference key="3">
    <citation type="journal article" date="1984" name="J. Bacteriol.">
        <title>Purification and properties of methanol:5-hydroxybenzimidazolylcobamide methyltransferase from Methanosarcina barkeri.</title>
        <authorList>
            <person name="van der Meijden P."/>
            <person name="te Brommelstroet B.W."/>
            <person name="Poirot C.M."/>
            <person name="van der Drift C."/>
            <person name="Vogels G.D."/>
        </authorList>
    </citation>
    <scope>IDENTIFICATION</scope>
    <source>
        <strain>Fusaro / DSM 804</strain>
    </source>
</reference>
<reference key="4">
    <citation type="journal article" date="1997" name="Eur. J. Biochem.">
        <title>Methanol:coenzyme M methyltransferase from Methanosarcina barkeri. Zinc dependence and thermodynamics of the methanol:cob(I)alamin methyltransferase reaction.</title>
        <authorList>
            <person name="Sauer K."/>
            <person name="Thauer R.K."/>
        </authorList>
    </citation>
    <scope>FUNCTION</scope>
    <scope>CATALYTIC ACTIVITY</scope>
    <source>
        <strain>Fusaro / DSM 804</strain>
    </source>
</reference>
<reference key="5">
    <citation type="journal article" date="2006" name="Proc. Natl. Acad. Sci. U.S.A.">
        <title>Insight into the mechanism of biological methanol activation based on the crystal structure of the methanol-cobalamin methyltransferase complex.</title>
        <authorList>
            <person name="Hagemeier C.H."/>
            <person name="Krer M."/>
            <person name="Thauer R.K."/>
            <person name="Warkentin E."/>
            <person name="Ermler U."/>
        </authorList>
    </citation>
    <scope>X-RAY CRYSTALLOGRAPHY (2.50 ANGSTROMS) IN COMPLEX WITH MTAC AND ZINC</scope>
    <scope>INTERACTION WITH MTAC</scope>
    <scope>SUBUNIT</scope>
    <source>
        <strain>Fusaro / DSM 804</strain>
    </source>
</reference>